<feature type="chain" id="PRO_0000051986" description="Cytochrome P450 26B1">
    <location>
        <begin position="1"/>
        <end position="511"/>
    </location>
</feature>
<feature type="binding site" description="axial binding residue" evidence="2">
    <location>
        <position position="440"/>
    </location>
    <ligand>
        <name>heme</name>
        <dbReference type="ChEBI" id="CHEBI:30413"/>
    </ligand>
    <ligandPart>
        <name>Fe</name>
        <dbReference type="ChEBI" id="CHEBI:18248"/>
    </ligandPart>
</feature>
<feature type="sequence conflict" description="In Ref. 2; AAH66759." evidence="9" ref="2">
    <original>P</original>
    <variation>S</variation>
    <location>
        <position position="29"/>
    </location>
</feature>
<accession>Q6EIG3</accession>
<accession>Q6NY30</accession>
<reference evidence="9 11" key="1">
    <citation type="journal article" date="2005" name="Gene Expr. Patterns">
        <title>Expression of cyp26b1 during zebrafish early development.</title>
        <authorList>
            <person name="Zhao Q."/>
            <person name="Dobbs-McAuliffe B."/>
            <person name="Linney E."/>
        </authorList>
    </citation>
    <scope>NUCLEOTIDE SEQUENCE [MRNA]</scope>
    <scope>FUNCTION</scope>
    <scope>DEVELOPMENTAL STAGE</scope>
</reference>
<reference evidence="9 10" key="2">
    <citation type="submission" date="2004-03" db="EMBL/GenBank/DDBJ databases">
        <authorList>
            <consortium name="NIH - Zebrafish Gene Collection (ZGC) project"/>
        </authorList>
    </citation>
    <scope>NUCLEOTIDE SEQUENCE [LARGE SCALE MRNA]</scope>
    <source>
        <tissue evidence="10">Embryo</tissue>
    </source>
</reference>
<reference key="3">
    <citation type="journal article" date="2011" name="Am. J. Hum. Genet.">
        <title>Craniosynostosis and multiple skeletal anomalies in humans and zebrafish result from a defect in the localized degradation of retinoic acid.</title>
        <authorList>
            <person name="Laue K."/>
            <person name="Pogoda H.M."/>
            <person name="Daniel P.B."/>
            <person name="van Haeringen A."/>
            <person name="Alanay Y."/>
            <person name="von Ameln S."/>
            <person name="Rachwalski M."/>
            <person name="Morgan T."/>
            <person name="Gray M.J."/>
            <person name="Breuning M.H."/>
            <person name="Sawyer G.M."/>
            <person name="Sutherland-Smith A.J."/>
            <person name="Nikkels P.G."/>
            <person name="Kubisch C."/>
            <person name="Bloch W."/>
            <person name="Wollnik B."/>
            <person name="Hammerschmidt M."/>
            <person name="Robertson S.P."/>
        </authorList>
    </citation>
    <scope>FUNCTION IN SKELETAL DEVELOPMENT</scope>
</reference>
<gene>
    <name evidence="11" type="primary">cyp26b1</name>
</gene>
<dbReference type="EC" id="1.14.13.-" evidence="4"/>
<dbReference type="EMBL" id="AY321366">
    <property type="protein sequence ID" value="AAQ82596.1"/>
    <property type="molecule type" value="mRNA"/>
</dbReference>
<dbReference type="EMBL" id="BC066759">
    <property type="protein sequence ID" value="AAH66759.1"/>
    <property type="molecule type" value="mRNA"/>
</dbReference>
<dbReference type="RefSeq" id="NP_997831.1">
    <property type="nucleotide sequence ID" value="NM_212666.1"/>
</dbReference>
<dbReference type="SMR" id="Q6EIG3"/>
<dbReference type="FunCoup" id="Q6EIG3">
    <property type="interactions" value="168"/>
</dbReference>
<dbReference type="STRING" id="7955.ENSDARP00000101543"/>
<dbReference type="PaxDb" id="7955-ENSDARP00000101543"/>
<dbReference type="GeneID" id="324188"/>
<dbReference type="KEGG" id="dre:324188"/>
<dbReference type="AGR" id="ZFIN:ZDB-GENE-030131-2908"/>
<dbReference type="CTD" id="56603"/>
<dbReference type="ZFIN" id="ZDB-GENE-030131-2908">
    <property type="gene designation" value="cyp26b1"/>
</dbReference>
<dbReference type="eggNOG" id="KOG0157">
    <property type="taxonomic scope" value="Eukaryota"/>
</dbReference>
<dbReference type="InParanoid" id="Q6EIG3"/>
<dbReference type="OrthoDB" id="1372046at2759"/>
<dbReference type="PhylomeDB" id="Q6EIG3"/>
<dbReference type="TreeFam" id="TF105093"/>
<dbReference type="Reactome" id="R-DRE-211916">
    <property type="pathway name" value="Vitamins"/>
</dbReference>
<dbReference type="Reactome" id="R-DRE-5365859">
    <property type="pathway name" value="RA biosynthesis pathway"/>
</dbReference>
<dbReference type="PRO" id="PR:Q6EIG3"/>
<dbReference type="Proteomes" id="UP000000437">
    <property type="component" value="Chromosome 7"/>
</dbReference>
<dbReference type="GO" id="GO:0005789">
    <property type="term" value="C:endoplasmic reticulum membrane"/>
    <property type="evidence" value="ECO:0007669"/>
    <property type="project" value="UniProtKB-SubCell"/>
</dbReference>
<dbReference type="GO" id="GO:0062183">
    <property type="term" value="F:all-trans retinoic acid 18-hydroxylase activity"/>
    <property type="evidence" value="ECO:0007669"/>
    <property type="project" value="RHEA"/>
</dbReference>
<dbReference type="GO" id="GO:0020037">
    <property type="term" value="F:heme binding"/>
    <property type="evidence" value="ECO:0007669"/>
    <property type="project" value="InterPro"/>
</dbReference>
<dbReference type="GO" id="GO:0005506">
    <property type="term" value="F:iron ion binding"/>
    <property type="evidence" value="ECO:0007669"/>
    <property type="project" value="InterPro"/>
</dbReference>
<dbReference type="GO" id="GO:0004497">
    <property type="term" value="F:monooxygenase activity"/>
    <property type="evidence" value="ECO:0000318"/>
    <property type="project" value="GO_Central"/>
</dbReference>
<dbReference type="GO" id="GO:0008401">
    <property type="term" value="F:retinoic acid 4-hydroxylase activity"/>
    <property type="evidence" value="ECO:0000250"/>
    <property type="project" value="UniProtKB"/>
</dbReference>
<dbReference type="GO" id="GO:0060349">
    <property type="term" value="P:bone morphogenesis"/>
    <property type="evidence" value="ECO:0000315"/>
    <property type="project" value="ZFIN"/>
</dbReference>
<dbReference type="GO" id="GO:0060536">
    <property type="term" value="P:cartilage morphogenesis"/>
    <property type="evidence" value="ECO:0000315"/>
    <property type="project" value="ZFIN"/>
</dbReference>
<dbReference type="GO" id="GO:0007417">
    <property type="term" value="P:central nervous system development"/>
    <property type="evidence" value="ECO:0000318"/>
    <property type="project" value="GO_Central"/>
</dbReference>
<dbReference type="GO" id="GO:0060365">
    <property type="term" value="P:coronal suture morphogenesis"/>
    <property type="evidence" value="ECO:0000315"/>
    <property type="project" value="ZFIN"/>
</dbReference>
<dbReference type="GO" id="GO:0060363">
    <property type="term" value="P:cranial suture morphogenesis"/>
    <property type="evidence" value="ECO:0000315"/>
    <property type="project" value="ZFIN"/>
</dbReference>
<dbReference type="GO" id="GO:0048701">
    <property type="term" value="P:embryonic cranial skeleton morphogenesis"/>
    <property type="evidence" value="ECO:0000315"/>
    <property type="project" value="ZFIN"/>
</dbReference>
<dbReference type="GO" id="GO:0060323">
    <property type="term" value="P:head morphogenesis"/>
    <property type="evidence" value="ECO:0000315"/>
    <property type="project" value="ZFIN"/>
</dbReference>
<dbReference type="GO" id="GO:0030902">
    <property type="term" value="P:hindbrain development"/>
    <property type="evidence" value="ECO:0000316"/>
    <property type="project" value="ZFIN"/>
</dbReference>
<dbReference type="GO" id="GO:0048387">
    <property type="term" value="P:negative regulation of retinoic acid receptor signaling pathway"/>
    <property type="evidence" value="ECO:0000314"/>
    <property type="project" value="UniProtKB"/>
</dbReference>
<dbReference type="GO" id="GO:0042476">
    <property type="term" value="P:odontogenesis"/>
    <property type="evidence" value="ECO:0000315"/>
    <property type="project" value="ZFIN"/>
</dbReference>
<dbReference type="GO" id="GO:0030278">
    <property type="term" value="P:regulation of ossification"/>
    <property type="evidence" value="ECO:0000315"/>
    <property type="project" value="ZFIN"/>
</dbReference>
<dbReference type="GO" id="GO:0034653">
    <property type="term" value="P:retinoic acid catabolic process"/>
    <property type="evidence" value="ECO:0000315"/>
    <property type="project" value="ZFIN"/>
</dbReference>
<dbReference type="GO" id="GO:0042573">
    <property type="term" value="P:retinoic acid metabolic process"/>
    <property type="evidence" value="ECO:0000304"/>
    <property type="project" value="UniProtKB"/>
</dbReference>
<dbReference type="GO" id="GO:0021661">
    <property type="term" value="P:rhombomere 4 morphogenesis"/>
    <property type="evidence" value="ECO:0000316"/>
    <property type="project" value="ZFIN"/>
</dbReference>
<dbReference type="GO" id="GO:0035992">
    <property type="term" value="P:tendon formation"/>
    <property type="evidence" value="ECO:0000315"/>
    <property type="project" value="ZFIN"/>
</dbReference>
<dbReference type="CDD" id="cd20637">
    <property type="entry name" value="CYP26B1"/>
    <property type="match status" value="1"/>
</dbReference>
<dbReference type="FunFam" id="1.10.630.10:FF:000009">
    <property type="entry name" value="Cytochrome P450 26B1 isoform 1"/>
    <property type="match status" value="1"/>
</dbReference>
<dbReference type="Gene3D" id="1.10.630.10">
    <property type="entry name" value="Cytochrome P450"/>
    <property type="match status" value="1"/>
</dbReference>
<dbReference type="InterPro" id="IPR001128">
    <property type="entry name" value="Cyt_P450"/>
</dbReference>
<dbReference type="InterPro" id="IPR017972">
    <property type="entry name" value="Cyt_P450_CS"/>
</dbReference>
<dbReference type="InterPro" id="IPR002403">
    <property type="entry name" value="Cyt_P450_E_grp-IV"/>
</dbReference>
<dbReference type="InterPro" id="IPR036396">
    <property type="entry name" value="Cyt_P450_sf"/>
</dbReference>
<dbReference type="PANTHER" id="PTHR24286">
    <property type="entry name" value="CYTOCHROME P450 26"/>
    <property type="match status" value="1"/>
</dbReference>
<dbReference type="PANTHER" id="PTHR24286:SF177">
    <property type="entry name" value="CYTOCHROME P450 26B1"/>
    <property type="match status" value="1"/>
</dbReference>
<dbReference type="Pfam" id="PF00067">
    <property type="entry name" value="p450"/>
    <property type="match status" value="1"/>
</dbReference>
<dbReference type="PRINTS" id="PR00465">
    <property type="entry name" value="EP450IV"/>
</dbReference>
<dbReference type="PRINTS" id="PR00385">
    <property type="entry name" value="P450"/>
</dbReference>
<dbReference type="SUPFAM" id="SSF48264">
    <property type="entry name" value="Cytochrome P450"/>
    <property type="match status" value="1"/>
</dbReference>
<dbReference type="PROSITE" id="PS00086">
    <property type="entry name" value="CYTOCHROME_P450"/>
    <property type="match status" value="1"/>
</dbReference>
<comment type="function">
    <text evidence="3 4 7 8">A cytochrome P450 monooxygenase involved in the metabolism of retinoates (RAs), the active metabolites of vitamin A, and critical signaling molecules in animals (PubMed:15661642). RAs exist as at least four different isomers: all-trans-RA (atRA), 9-cis-RA, 13-cis-RA, and 9,13-dicis-RA, where atRA is considered to be the biologically active isomer, although 9-cis-RA and 13-cis-RA also have activity (By similarity). Catalyzes the hydroxylation of atRA primarily at C-4 and C-18, thereby contributing to the regulation of atRA homeostasis and signaling (By similarity). Hydroxylation of atRA limits its biological activity and initiates a degradative process leading to its eventual elimination (By similarity). Involved in the convertion of atRA to all-trans-4-oxo-RA. Can oxidize all-trans-13,14-dihydroretinoate (DRA) to metabolites which could include all-trans-4-oxo-DRA, all-trans-4-hydroxy-DRA, all-trans-5,8-epoxy-DRA, and all-trans-18-hydroxy-DRA (By similarity). Plays a role in skeletal development, both at the level of patterning and in the ossification of bone and the establishment of some synovial joints (PubMed:22019272).</text>
</comment>
<comment type="catalytic activity">
    <reaction evidence="3">
        <text>all-trans-retinoate + reduced [NADPH--hemoprotein reductase] + O2 = all-trans-4-hydroxyretinoate + oxidized [NADPH--hemoprotein reductase] + H2O + H(+)</text>
        <dbReference type="Rhea" id="RHEA:51984"/>
        <dbReference type="Rhea" id="RHEA-COMP:11964"/>
        <dbReference type="Rhea" id="RHEA-COMP:11965"/>
        <dbReference type="ChEBI" id="CHEBI:15377"/>
        <dbReference type="ChEBI" id="CHEBI:15378"/>
        <dbReference type="ChEBI" id="CHEBI:15379"/>
        <dbReference type="ChEBI" id="CHEBI:35291"/>
        <dbReference type="ChEBI" id="CHEBI:57618"/>
        <dbReference type="ChEBI" id="CHEBI:58210"/>
        <dbReference type="ChEBI" id="CHEBI:134178"/>
    </reaction>
    <physiologicalReaction direction="left-to-right" evidence="3">
        <dbReference type="Rhea" id="RHEA:51985"/>
    </physiologicalReaction>
</comment>
<comment type="catalytic activity">
    <reaction evidence="3">
        <text>all-trans-retinoate + reduced [NADPH--hemoprotein reductase] + O2 = all-trans-18-hydroxyretinoate + oxidized [NADPH--hemoprotein reductase] + H2O + H(+)</text>
        <dbReference type="Rhea" id="RHEA:55856"/>
        <dbReference type="Rhea" id="RHEA-COMP:11964"/>
        <dbReference type="Rhea" id="RHEA-COMP:11965"/>
        <dbReference type="ChEBI" id="CHEBI:15377"/>
        <dbReference type="ChEBI" id="CHEBI:15378"/>
        <dbReference type="ChEBI" id="CHEBI:15379"/>
        <dbReference type="ChEBI" id="CHEBI:35291"/>
        <dbReference type="ChEBI" id="CHEBI:57618"/>
        <dbReference type="ChEBI" id="CHEBI:58210"/>
        <dbReference type="ChEBI" id="CHEBI:139258"/>
    </reaction>
    <physiologicalReaction direction="left-to-right" evidence="3">
        <dbReference type="Rhea" id="RHEA:55857"/>
    </physiologicalReaction>
</comment>
<comment type="cofactor">
    <cofactor evidence="5">
        <name>heme</name>
        <dbReference type="ChEBI" id="CHEBI:30413"/>
    </cofactor>
</comment>
<comment type="subcellular location">
    <subcellularLocation>
        <location evidence="1">Endoplasmic reticulum membrane</location>
        <topology evidence="1">Peripheral membrane protein</topology>
    </subcellularLocation>
    <subcellularLocation>
        <location evidence="1">Microsome membrane</location>
        <topology evidence="1">Peripheral membrane protein</topology>
    </subcellularLocation>
</comment>
<comment type="developmental stage">
    <text evidence="7">Expressed zygotically. Weak expression at 75% epiboly. At the 2-somite stage, expressed in the presumptive rhombomere 4 (r4) region partially overlapping with the r3 region. At the 10-somite stage, expressed in the r4, r3 and r2 regions. At the 14-somite stage, expression extends to the r5 and r6 regions and is observed in the diencephalon. At 24-48 hours post-fertilization (hpf), additionally expressed in the eye, midbrain-hindbrain boundary, cerebellum, pectoral fin and the pharyngeal arch primordia.</text>
</comment>
<comment type="similarity">
    <text evidence="6">Belongs to the cytochrome P450 family.</text>
</comment>
<organism>
    <name type="scientific">Danio rerio</name>
    <name type="common">Zebrafish</name>
    <name type="synonym">Brachydanio rerio</name>
    <dbReference type="NCBI Taxonomy" id="7955"/>
    <lineage>
        <taxon>Eukaryota</taxon>
        <taxon>Metazoa</taxon>
        <taxon>Chordata</taxon>
        <taxon>Craniata</taxon>
        <taxon>Vertebrata</taxon>
        <taxon>Euteleostomi</taxon>
        <taxon>Actinopterygii</taxon>
        <taxon>Neopterygii</taxon>
        <taxon>Teleostei</taxon>
        <taxon>Ostariophysi</taxon>
        <taxon>Cypriniformes</taxon>
        <taxon>Danionidae</taxon>
        <taxon>Danioninae</taxon>
        <taxon>Danio</taxon>
    </lineage>
</organism>
<sequence>MLFESFDLVSALATLAACLVSMALLLAVPQQLWQLRWTATRDKSCKLPMPKGSMGFPIIGETCHWFFQGAGFHASRRQKYGNVFKTHLLGRPLIRVTGAENVRKVLMGEHSLVTVDWPQSTSTLLGPNSLANSIGDIHRKRRKIFAKVFSHEALESYLPKIQQVIQETLRVWSSNPDPINVYRESQRLSFNMAVRVLLGFRIPEEEMHCLFSTFQEFVENVFSLPIDLPFSGYRKGIRARDSLQKSIEKAIREKPLHTQGKDYTDALDVLLESAKENNTELTMQELKESTIELIFAAFATTASASTSLVMQLLRHPAVLEKLREELRSCGLLHDGCLCQGELRLDSIISLKYLDCVIKEVLRLFAPVSGGYRIATQTFELDGVQVPKGWSVMYSIRDTHDTSAVFKDVEAFDPDRFSPERSEDREGRFHYLPFGGGVRSCLGKQLATLFLKLLAVELAGGSRFELSTRTFPRMISVPVVHPTDGLRVKFFGLDSNQNQIMAKSDEMLDATV</sequence>
<name>CP26B_DANRE</name>
<keyword id="KW-0256">Endoplasmic reticulum</keyword>
<keyword id="KW-0349">Heme</keyword>
<keyword id="KW-0408">Iron</keyword>
<keyword id="KW-0443">Lipid metabolism</keyword>
<keyword id="KW-0472">Membrane</keyword>
<keyword id="KW-0479">Metal-binding</keyword>
<keyword id="KW-0492">Microsome</keyword>
<keyword id="KW-0503">Monooxygenase</keyword>
<keyword id="KW-0560">Oxidoreductase</keyword>
<keyword id="KW-1185">Reference proteome</keyword>
<protein>
    <recommendedName>
        <fullName>Cytochrome P450 26B1</fullName>
        <shortName>Cyp26B1</shortName>
        <ecNumber evidence="4">1.14.13.-</ecNumber>
    </recommendedName>
    <alternativeName>
        <fullName>Retinoic acid-metabolizing cytochrome</fullName>
    </alternativeName>
</protein>
<proteinExistence type="evidence at protein level"/>
<evidence type="ECO:0000250" key="1">
    <source>
        <dbReference type="UniProtKB" id="O43174"/>
    </source>
</evidence>
<evidence type="ECO:0000250" key="2">
    <source>
        <dbReference type="UniProtKB" id="P00179"/>
    </source>
</evidence>
<evidence type="ECO:0000250" key="3">
    <source>
        <dbReference type="UniProtKB" id="Q811W2"/>
    </source>
</evidence>
<evidence type="ECO:0000250" key="4">
    <source>
        <dbReference type="UniProtKB" id="Q9NR63"/>
    </source>
</evidence>
<evidence type="ECO:0000250" key="5">
    <source>
        <dbReference type="UniProtKB" id="Q9Y6A2"/>
    </source>
</evidence>
<evidence type="ECO:0000255" key="6"/>
<evidence type="ECO:0000269" key="7">
    <source>
    </source>
</evidence>
<evidence type="ECO:0000269" key="8">
    <source>
    </source>
</evidence>
<evidence type="ECO:0000305" key="9"/>
<evidence type="ECO:0000312" key="10">
    <source>
        <dbReference type="EMBL" id="AAH66759.1"/>
    </source>
</evidence>
<evidence type="ECO:0000312" key="11">
    <source>
        <dbReference type="EMBL" id="AAQ82596.1"/>
    </source>
</evidence>